<comment type="function">
    <text evidence="1">Binds to 23S rRNA. Forms part of two intersubunit bridges in the 70S ribosome.</text>
</comment>
<comment type="subunit">
    <text evidence="1">Part of the 50S ribosomal subunit. Forms a cluster with proteins L3 and L19. In the 70S ribosome, L14 and L19 interact and together make contacts with the 16S rRNA in bridges B5 and B8.</text>
</comment>
<comment type="similarity">
    <text evidence="1">Belongs to the universal ribosomal protein uL14 family.</text>
</comment>
<gene>
    <name evidence="1" type="primary">rplN</name>
    <name type="ordered locus">EC55989_3726</name>
</gene>
<name>RL14_ECO55</name>
<organism>
    <name type="scientific">Escherichia coli (strain 55989 / EAEC)</name>
    <dbReference type="NCBI Taxonomy" id="585055"/>
    <lineage>
        <taxon>Bacteria</taxon>
        <taxon>Pseudomonadati</taxon>
        <taxon>Pseudomonadota</taxon>
        <taxon>Gammaproteobacteria</taxon>
        <taxon>Enterobacterales</taxon>
        <taxon>Enterobacteriaceae</taxon>
        <taxon>Escherichia</taxon>
    </lineage>
</organism>
<dbReference type="EMBL" id="CU928145">
    <property type="protein sequence ID" value="CAV00020.1"/>
    <property type="molecule type" value="Genomic_DNA"/>
</dbReference>
<dbReference type="RefSeq" id="WP_000613955.1">
    <property type="nucleotide sequence ID" value="NZ_CP028304.1"/>
</dbReference>
<dbReference type="SMR" id="B7L4J9"/>
<dbReference type="GeneID" id="93778677"/>
<dbReference type="KEGG" id="eck:EC55989_3726"/>
<dbReference type="HOGENOM" id="CLU_095071_2_1_6"/>
<dbReference type="Proteomes" id="UP000000746">
    <property type="component" value="Chromosome"/>
</dbReference>
<dbReference type="GO" id="GO:0022625">
    <property type="term" value="C:cytosolic large ribosomal subunit"/>
    <property type="evidence" value="ECO:0007669"/>
    <property type="project" value="TreeGrafter"/>
</dbReference>
<dbReference type="GO" id="GO:0070180">
    <property type="term" value="F:large ribosomal subunit rRNA binding"/>
    <property type="evidence" value="ECO:0007669"/>
    <property type="project" value="TreeGrafter"/>
</dbReference>
<dbReference type="GO" id="GO:0003735">
    <property type="term" value="F:structural constituent of ribosome"/>
    <property type="evidence" value="ECO:0007669"/>
    <property type="project" value="InterPro"/>
</dbReference>
<dbReference type="GO" id="GO:0006412">
    <property type="term" value="P:translation"/>
    <property type="evidence" value="ECO:0007669"/>
    <property type="project" value="UniProtKB-UniRule"/>
</dbReference>
<dbReference type="CDD" id="cd00337">
    <property type="entry name" value="Ribosomal_uL14"/>
    <property type="match status" value="1"/>
</dbReference>
<dbReference type="FunFam" id="2.40.150.20:FF:000001">
    <property type="entry name" value="50S ribosomal protein L14"/>
    <property type="match status" value="1"/>
</dbReference>
<dbReference type="Gene3D" id="2.40.150.20">
    <property type="entry name" value="Ribosomal protein L14"/>
    <property type="match status" value="1"/>
</dbReference>
<dbReference type="HAMAP" id="MF_01367">
    <property type="entry name" value="Ribosomal_uL14"/>
    <property type="match status" value="1"/>
</dbReference>
<dbReference type="InterPro" id="IPR000218">
    <property type="entry name" value="Ribosomal_uL14"/>
</dbReference>
<dbReference type="InterPro" id="IPR005745">
    <property type="entry name" value="Ribosomal_uL14_bac-type"/>
</dbReference>
<dbReference type="InterPro" id="IPR019972">
    <property type="entry name" value="Ribosomal_uL14_CS"/>
</dbReference>
<dbReference type="InterPro" id="IPR036853">
    <property type="entry name" value="Ribosomal_uL14_sf"/>
</dbReference>
<dbReference type="NCBIfam" id="TIGR01067">
    <property type="entry name" value="rplN_bact"/>
    <property type="match status" value="1"/>
</dbReference>
<dbReference type="PANTHER" id="PTHR11761">
    <property type="entry name" value="50S/60S RIBOSOMAL PROTEIN L14/L23"/>
    <property type="match status" value="1"/>
</dbReference>
<dbReference type="PANTHER" id="PTHR11761:SF3">
    <property type="entry name" value="LARGE RIBOSOMAL SUBUNIT PROTEIN UL14M"/>
    <property type="match status" value="1"/>
</dbReference>
<dbReference type="Pfam" id="PF00238">
    <property type="entry name" value="Ribosomal_L14"/>
    <property type="match status" value="1"/>
</dbReference>
<dbReference type="SMART" id="SM01374">
    <property type="entry name" value="Ribosomal_L14"/>
    <property type="match status" value="1"/>
</dbReference>
<dbReference type="SUPFAM" id="SSF50193">
    <property type="entry name" value="Ribosomal protein L14"/>
    <property type="match status" value="1"/>
</dbReference>
<dbReference type="PROSITE" id="PS00049">
    <property type="entry name" value="RIBOSOMAL_L14"/>
    <property type="match status" value="1"/>
</dbReference>
<reference key="1">
    <citation type="journal article" date="2009" name="PLoS Genet.">
        <title>Organised genome dynamics in the Escherichia coli species results in highly diverse adaptive paths.</title>
        <authorList>
            <person name="Touchon M."/>
            <person name="Hoede C."/>
            <person name="Tenaillon O."/>
            <person name="Barbe V."/>
            <person name="Baeriswyl S."/>
            <person name="Bidet P."/>
            <person name="Bingen E."/>
            <person name="Bonacorsi S."/>
            <person name="Bouchier C."/>
            <person name="Bouvet O."/>
            <person name="Calteau A."/>
            <person name="Chiapello H."/>
            <person name="Clermont O."/>
            <person name="Cruveiller S."/>
            <person name="Danchin A."/>
            <person name="Diard M."/>
            <person name="Dossat C."/>
            <person name="Karoui M.E."/>
            <person name="Frapy E."/>
            <person name="Garry L."/>
            <person name="Ghigo J.M."/>
            <person name="Gilles A.M."/>
            <person name="Johnson J."/>
            <person name="Le Bouguenec C."/>
            <person name="Lescat M."/>
            <person name="Mangenot S."/>
            <person name="Martinez-Jehanne V."/>
            <person name="Matic I."/>
            <person name="Nassif X."/>
            <person name="Oztas S."/>
            <person name="Petit M.A."/>
            <person name="Pichon C."/>
            <person name="Rouy Z."/>
            <person name="Ruf C.S."/>
            <person name="Schneider D."/>
            <person name="Tourret J."/>
            <person name="Vacherie B."/>
            <person name="Vallenet D."/>
            <person name="Medigue C."/>
            <person name="Rocha E.P.C."/>
            <person name="Denamur E."/>
        </authorList>
    </citation>
    <scope>NUCLEOTIDE SEQUENCE [LARGE SCALE GENOMIC DNA]</scope>
    <source>
        <strain>55989 / EAEC</strain>
    </source>
</reference>
<proteinExistence type="inferred from homology"/>
<feature type="chain" id="PRO_1000166920" description="Large ribosomal subunit protein uL14">
    <location>
        <begin position="1"/>
        <end position="123"/>
    </location>
</feature>
<sequence>MIQEQTMLNVADNSGARRVMCIKVLGGSHRRYAGVGDIIKITIKEAIPRGKVKKGDVLKAVVVRTKKGVRRPDGSVIRFDGNACVLLNNNSEQPIGTRIFGPVTRELRSEKFMKIISLAPEVL</sequence>
<evidence type="ECO:0000255" key="1">
    <source>
        <dbReference type="HAMAP-Rule" id="MF_01367"/>
    </source>
</evidence>
<evidence type="ECO:0000305" key="2"/>
<accession>B7L4J9</accession>
<protein>
    <recommendedName>
        <fullName evidence="1">Large ribosomal subunit protein uL14</fullName>
    </recommendedName>
    <alternativeName>
        <fullName evidence="2">50S ribosomal protein L14</fullName>
    </alternativeName>
</protein>
<keyword id="KW-1185">Reference proteome</keyword>
<keyword id="KW-0687">Ribonucleoprotein</keyword>
<keyword id="KW-0689">Ribosomal protein</keyword>
<keyword id="KW-0694">RNA-binding</keyword>
<keyword id="KW-0699">rRNA-binding</keyword>